<gene>
    <name evidence="1" type="primary">asnS</name>
    <name type="ordered locus">PH0241</name>
</gene>
<reference key="1">
    <citation type="journal article" date="1998" name="DNA Res.">
        <title>Complete sequence and gene organization of the genome of a hyper-thermophilic archaebacterium, Pyrococcus horikoshii OT3.</title>
        <authorList>
            <person name="Kawarabayasi Y."/>
            <person name="Sawada M."/>
            <person name="Horikawa H."/>
            <person name="Haikawa Y."/>
            <person name="Hino Y."/>
            <person name="Yamamoto S."/>
            <person name="Sekine M."/>
            <person name="Baba S."/>
            <person name="Kosugi H."/>
            <person name="Hosoyama A."/>
            <person name="Nagai Y."/>
            <person name="Sakai M."/>
            <person name="Ogura K."/>
            <person name="Otsuka R."/>
            <person name="Nakazawa H."/>
            <person name="Takamiya M."/>
            <person name="Ohfuku Y."/>
            <person name="Funahashi T."/>
            <person name="Tanaka T."/>
            <person name="Kudoh Y."/>
            <person name="Yamazaki J."/>
            <person name="Kushida N."/>
            <person name="Oguchi A."/>
            <person name="Aoki K."/>
            <person name="Yoshizawa T."/>
            <person name="Nakamura Y."/>
            <person name="Robb F.T."/>
            <person name="Horikoshi K."/>
            <person name="Masuchi Y."/>
            <person name="Shizuya H."/>
            <person name="Kikuchi H."/>
        </authorList>
    </citation>
    <scope>NUCLEOTIDE SEQUENCE [LARGE SCALE GENOMIC DNA]</scope>
    <source>
        <strain>ATCC 700860 / DSM 12428 / JCM 9974 / NBRC 100139 / OT-3</strain>
    </source>
</reference>
<feature type="chain" id="PRO_0000176487" description="Asparagine--tRNA ligase">
    <location>
        <begin position="1"/>
        <end position="434"/>
    </location>
</feature>
<feature type="helix" evidence="2">
    <location>
        <begin position="7"/>
        <end position="9"/>
    </location>
</feature>
<feature type="helix" evidence="2">
    <location>
        <begin position="12"/>
        <end position="14"/>
    </location>
</feature>
<feature type="strand" evidence="2">
    <location>
        <begin position="18"/>
        <end position="31"/>
    </location>
</feature>
<feature type="strand" evidence="2">
    <location>
        <begin position="34"/>
        <end position="41"/>
    </location>
</feature>
<feature type="strand" evidence="2">
    <location>
        <begin position="44"/>
        <end position="50"/>
    </location>
</feature>
<feature type="helix" evidence="2">
    <location>
        <begin position="52"/>
        <end position="55"/>
    </location>
</feature>
<feature type="helix" evidence="2">
    <location>
        <begin position="57"/>
        <end position="64"/>
    </location>
</feature>
<feature type="strand" evidence="2">
    <location>
        <begin position="71"/>
        <end position="80"/>
    </location>
</feature>
<feature type="helix" evidence="2">
    <location>
        <begin position="85"/>
        <end position="87"/>
    </location>
</feature>
<feature type="strand" evidence="2">
    <location>
        <begin position="88"/>
        <end position="99"/>
    </location>
</feature>
<feature type="helix" evidence="2">
    <location>
        <begin position="110"/>
        <end position="112"/>
    </location>
</feature>
<feature type="helix" evidence="2">
    <location>
        <begin position="115"/>
        <end position="120"/>
    </location>
</feature>
<feature type="helix" evidence="2">
    <location>
        <begin position="122"/>
        <end position="125"/>
    </location>
</feature>
<feature type="helix" evidence="2">
    <location>
        <begin position="129"/>
        <end position="151"/>
    </location>
</feature>
<feature type="strand" evidence="2">
    <location>
        <begin position="161"/>
        <end position="164"/>
    </location>
</feature>
<feature type="helix" evidence="2">
    <location>
        <begin position="170"/>
        <end position="172"/>
    </location>
</feature>
<feature type="strand" evidence="2">
    <location>
        <begin position="175"/>
        <end position="178"/>
    </location>
</feature>
<feature type="strand" evidence="2">
    <location>
        <begin position="181"/>
        <end position="185"/>
    </location>
</feature>
<feature type="helix" evidence="2">
    <location>
        <begin position="190"/>
        <end position="200"/>
    </location>
</feature>
<feature type="strand" evidence="2">
    <location>
        <begin position="201"/>
        <end position="210"/>
    </location>
</feature>
<feature type="strand" evidence="2">
    <location>
        <begin position="222"/>
        <end position="232"/>
    </location>
</feature>
<feature type="helix" evidence="2">
    <location>
        <begin position="236"/>
        <end position="257"/>
    </location>
</feature>
<feature type="helix" evidence="2">
    <location>
        <begin position="259"/>
        <end position="263"/>
    </location>
</feature>
<feature type="helix" evidence="2">
    <location>
        <begin position="270"/>
        <end position="273"/>
    </location>
</feature>
<feature type="strand" evidence="2">
    <location>
        <begin position="281"/>
        <end position="283"/>
    </location>
</feature>
<feature type="helix" evidence="2">
    <location>
        <begin position="284"/>
        <end position="293"/>
    </location>
</feature>
<feature type="helix" evidence="2">
    <location>
        <begin position="306"/>
        <end position="313"/>
    </location>
</feature>
<feature type="strand" evidence="2">
    <location>
        <begin position="320"/>
        <end position="326"/>
    </location>
</feature>
<feature type="helix" evidence="2">
    <location>
        <begin position="327"/>
        <end position="329"/>
    </location>
</feature>
<feature type="strand" evidence="2">
    <location>
        <begin position="343"/>
        <end position="351"/>
    </location>
</feature>
<feature type="turn" evidence="2">
    <location>
        <begin position="352"/>
        <end position="355"/>
    </location>
</feature>
<feature type="strand" evidence="2">
    <location>
        <begin position="356"/>
        <end position="364"/>
    </location>
</feature>
<feature type="helix" evidence="2">
    <location>
        <begin position="368"/>
        <end position="377"/>
    </location>
</feature>
<feature type="helix" evidence="2">
    <location>
        <begin position="382"/>
        <end position="385"/>
    </location>
</feature>
<feature type="helix" evidence="2">
    <location>
        <begin position="386"/>
        <end position="390"/>
    </location>
</feature>
<feature type="turn" evidence="2">
    <location>
        <begin position="391"/>
        <end position="393"/>
    </location>
</feature>
<feature type="strand" evidence="2">
    <location>
        <begin position="399"/>
        <end position="405"/>
    </location>
</feature>
<feature type="helix" evidence="2">
    <location>
        <begin position="406"/>
        <end position="413"/>
    </location>
</feature>
<feature type="helix" evidence="2">
    <location>
        <begin position="419"/>
        <end position="422"/>
    </location>
</feature>
<feature type="strand" evidence="2">
    <location>
        <begin position="423"/>
        <end position="425"/>
    </location>
</feature>
<proteinExistence type="evidence at protein level"/>
<sequence length="434" mass="50160">MIEKVYCQEVKPELDGKKVRLAGWVYTNMRVGKKIFLWIRDSTGIVQAVVAKNVVGEETFEKAKKLGRESSVIVEGIVKADERAPGGAEVHVEKLEVIQAVSEFPIPENPEQASPELLLDYRHLHIRTPKASAIMKVKETLIMAAREWLLKDGWHEVFPPILVTGAVEGGATLFKLKYFDKYAYLSQSAQLYLEAAIFGLEKVWSLTPSFRAEKSRTRRHLTEFWHLELEAAWMDLWDIMKVEEELVSYMVQRTLELRKKEIEMFRDDLTTLKNTEPPFPRISYDEAIDILQSKGVNVEWGDDLGADEERVLTEEFDRPFFVYGYPKHIKAFYMKEDPNDPRKVLASDMLAPEGYGEIIGGSQREDDYDKLLNRILEEGMDPKDYEWYLDLRRYGSVPHSGFGLGVERLVAWVLKLDHIRWAALFPRTPARLYP</sequence>
<keyword id="KW-0002">3D-structure</keyword>
<keyword id="KW-0030">Aminoacyl-tRNA synthetase</keyword>
<keyword id="KW-0067">ATP-binding</keyword>
<keyword id="KW-0963">Cytoplasm</keyword>
<keyword id="KW-0436">Ligase</keyword>
<keyword id="KW-0547">Nucleotide-binding</keyword>
<keyword id="KW-0648">Protein biosynthesis</keyword>
<evidence type="ECO:0000255" key="1">
    <source>
        <dbReference type="HAMAP-Rule" id="MF_00534"/>
    </source>
</evidence>
<evidence type="ECO:0007829" key="2">
    <source>
        <dbReference type="PDB" id="1X54"/>
    </source>
</evidence>
<name>SYN_PYRHO</name>
<organism>
    <name type="scientific">Pyrococcus horikoshii (strain ATCC 700860 / DSM 12428 / JCM 9974 / NBRC 100139 / OT-3)</name>
    <dbReference type="NCBI Taxonomy" id="70601"/>
    <lineage>
        <taxon>Archaea</taxon>
        <taxon>Methanobacteriati</taxon>
        <taxon>Methanobacteriota</taxon>
        <taxon>Thermococci</taxon>
        <taxon>Thermococcales</taxon>
        <taxon>Thermococcaceae</taxon>
        <taxon>Pyrococcus</taxon>
    </lineage>
</organism>
<dbReference type="EC" id="6.1.1.22" evidence="1"/>
<dbReference type="EMBL" id="BA000001">
    <property type="protein sequence ID" value="BAA29313.1"/>
    <property type="molecule type" value="Genomic_DNA"/>
</dbReference>
<dbReference type="PIR" id="B71248">
    <property type="entry name" value="B71248"/>
</dbReference>
<dbReference type="RefSeq" id="WP_010884344.1">
    <property type="nucleotide sequence ID" value="NC_000961.1"/>
</dbReference>
<dbReference type="PDB" id="1X54">
    <property type="method" value="X-ray"/>
    <property type="resolution" value="1.45 A"/>
    <property type="chains" value="A=1-434"/>
</dbReference>
<dbReference type="PDB" id="1X55">
    <property type="method" value="X-ray"/>
    <property type="resolution" value="1.80 A"/>
    <property type="chains" value="A=1-434"/>
</dbReference>
<dbReference type="PDB" id="1X56">
    <property type="method" value="X-ray"/>
    <property type="resolution" value="1.98 A"/>
    <property type="chains" value="A=1-434"/>
</dbReference>
<dbReference type="PDBsum" id="1X54"/>
<dbReference type="PDBsum" id="1X55"/>
<dbReference type="PDBsum" id="1X56"/>
<dbReference type="SMR" id="O57980"/>
<dbReference type="STRING" id="70601.gene:9377157"/>
<dbReference type="EnsemblBacteria" id="BAA29313">
    <property type="protein sequence ID" value="BAA29313"/>
    <property type="gene ID" value="BAA29313"/>
</dbReference>
<dbReference type="GeneID" id="1444131"/>
<dbReference type="KEGG" id="pho:PH0241"/>
<dbReference type="eggNOG" id="arCOG00407">
    <property type="taxonomic scope" value="Archaea"/>
</dbReference>
<dbReference type="OrthoDB" id="5908at2157"/>
<dbReference type="BRENDA" id="6.1.1.22">
    <property type="organism ID" value="5244"/>
</dbReference>
<dbReference type="EvolutionaryTrace" id="O57980"/>
<dbReference type="Proteomes" id="UP000000752">
    <property type="component" value="Chromosome"/>
</dbReference>
<dbReference type="GO" id="GO:0005737">
    <property type="term" value="C:cytoplasm"/>
    <property type="evidence" value="ECO:0007669"/>
    <property type="project" value="UniProtKB-SubCell"/>
</dbReference>
<dbReference type="GO" id="GO:0004816">
    <property type="term" value="F:asparagine-tRNA ligase activity"/>
    <property type="evidence" value="ECO:0007669"/>
    <property type="project" value="UniProtKB-UniRule"/>
</dbReference>
<dbReference type="GO" id="GO:0005524">
    <property type="term" value="F:ATP binding"/>
    <property type="evidence" value="ECO:0007669"/>
    <property type="project" value="UniProtKB-UniRule"/>
</dbReference>
<dbReference type="GO" id="GO:0003676">
    <property type="term" value="F:nucleic acid binding"/>
    <property type="evidence" value="ECO:0007669"/>
    <property type="project" value="InterPro"/>
</dbReference>
<dbReference type="GO" id="GO:0006421">
    <property type="term" value="P:asparaginyl-tRNA aminoacylation"/>
    <property type="evidence" value="ECO:0007669"/>
    <property type="project" value="UniProtKB-UniRule"/>
</dbReference>
<dbReference type="CDD" id="cd00776">
    <property type="entry name" value="AsxRS_core"/>
    <property type="match status" value="1"/>
</dbReference>
<dbReference type="CDD" id="cd04319">
    <property type="entry name" value="PhAsnRS_like_N"/>
    <property type="match status" value="1"/>
</dbReference>
<dbReference type="Gene3D" id="3.30.930.10">
    <property type="entry name" value="Bira Bifunctional Protein, Domain 2"/>
    <property type="match status" value="1"/>
</dbReference>
<dbReference type="Gene3D" id="2.40.50.140">
    <property type="entry name" value="Nucleic acid-binding proteins"/>
    <property type="match status" value="1"/>
</dbReference>
<dbReference type="HAMAP" id="MF_00534">
    <property type="entry name" value="Asn_tRNA_synth"/>
    <property type="match status" value="1"/>
</dbReference>
<dbReference type="InterPro" id="IPR004364">
    <property type="entry name" value="Aa-tRNA-synt_II"/>
</dbReference>
<dbReference type="InterPro" id="IPR006195">
    <property type="entry name" value="aa-tRNA-synth_II"/>
</dbReference>
<dbReference type="InterPro" id="IPR045864">
    <property type="entry name" value="aa-tRNA-synth_II/BPL/LPL"/>
</dbReference>
<dbReference type="InterPro" id="IPR004522">
    <property type="entry name" value="Asn-tRNA-ligase"/>
</dbReference>
<dbReference type="InterPro" id="IPR002312">
    <property type="entry name" value="Asp/Asn-tRNA-synth_IIb"/>
</dbReference>
<dbReference type="InterPro" id="IPR012340">
    <property type="entry name" value="NA-bd_OB-fold"/>
</dbReference>
<dbReference type="InterPro" id="IPR004365">
    <property type="entry name" value="NA-bd_OB_tRNA"/>
</dbReference>
<dbReference type="NCBIfam" id="TIGR00457">
    <property type="entry name" value="asnS"/>
    <property type="match status" value="1"/>
</dbReference>
<dbReference type="NCBIfam" id="NF003037">
    <property type="entry name" value="PRK03932.1"/>
    <property type="match status" value="1"/>
</dbReference>
<dbReference type="NCBIfam" id="NF003483">
    <property type="entry name" value="PRK05159.1"/>
    <property type="match status" value="1"/>
</dbReference>
<dbReference type="PANTHER" id="PTHR22594:SF34">
    <property type="entry name" value="ASPARAGINE--TRNA LIGASE, MITOCHONDRIAL-RELATED"/>
    <property type="match status" value="1"/>
</dbReference>
<dbReference type="PANTHER" id="PTHR22594">
    <property type="entry name" value="ASPARTYL/LYSYL-TRNA SYNTHETASE"/>
    <property type="match status" value="1"/>
</dbReference>
<dbReference type="Pfam" id="PF00152">
    <property type="entry name" value="tRNA-synt_2"/>
    <property type="match status" value="1"/>
</dbReference>
<dbReference type="Pfam" id="PF01336">
    <property type="entry name" value="tRNA_anti-codon"/>
    <property type="match status" value="1"/>
</dbReference>
<dbReference type="PRINTS" id="PR01042">
    <property type="entry name" value="TRNASYNTHASP"/>
</dbReference>
<dbReference type="SUPFAM" id="SSF55681">
    <property type="entry name" value="Class II aaRS and biotin synthetases"/>
    <property type="match status" value="1"/>
</dbReference>
<dbReference type="SUPFAM" id="SSF50249">
    <property type="entry name" value="Nucleic acid-binding proteins"/>
    <property type="match status" value="1"/>
</dbReference>
<dbReference type="PROSITE" id="PS50862">
    <property type="entry name" value="AA_TRNA_LIGASE_II"/>
    <property type="match status" value="1"/>
</dbReference>
<accession>O57980</accession>
<protein>
    <recommendedName>
        <fullName evidence="1">Asparagine--tRNA ligase</fullName>
        <ecNumber evidence="1">6.1.1.22</ecNumber>
    </recommendedName>
    <alternativeName>
        <fullName evidence="1">Asparaginyl-tRNA synthetase</fullName>
        <shortName evidence="1">AsnRS</shortName>
    </alternativeName>
</protein>
<comment type="catalytic activity">
    <reaction evidence="1">
        <text>tRNA(Asn) + L-asparagine + ATP = L-asparaginyl-tRNA(Asn) + AMP + diphosphate + H(+)</text>
        <dbReference type="Rhea" id="RHEA:11180"/>
        <dbReference type="Rhea" id="RHEA-COMP:9659"/>
        <dbReference type="Rhea" id="RHEA-COMP:9674"/>
        <dbReference type="ChEBI" id="CHEBI:15378"/>
        <dbReference type="ChEBI" id="CHEBI:30616"/>
        <dbReference type="ChEBI" id="CHEBI:33019"/>
        <dbReference type="ChEBI" id="CHEBI:58048"/>
        <dbReference type="ChEBI" id="CHEBI:78442"/>
        <dbReference type="ChEBI" id="CHEBI:78515"/>
        <dbReference type="ChEBI" id="CHEBI:456215"/>
        <dbReference type="EC" id="6.1.1.22"/>
    </reaction>
</comment>
<comment type="subcellular location">
    <subcellularLocation>
        <location>Cytoplasm</location>
    </subcellularLocation>
</comment>
<comment type="similarity">
    <text evidence="1">Belongs to the class-II aminoacyl-tRNA synthetase family.</text>
</comment>